<gene>
    <name evidence="1" type="primary">ecfA2</name>
    <name type="synonym">cbiO2</name>
    <name type="ordered locus">LSL_1406</name>
</gene>
<proteinExistence type="inferred from homology"/>
<accession>Q1WSB9</accession>
<dbReference type="EC" id="7.-.-.-" evidence="1"/>
<dbReference type="EMBL" id="CP000233">
    <property type="protein sequence ID" value="ABE00210.1"/>
    <property type="molecule type" value="Genomic_DNA"/>
</dbReference>
<dbReference type="RefSeq" id="WP_011476334.1">
    <property type="nucleotide sequence ID" value="NC_007929.1"/>
</dbReference>
<dbReference type="RefSeq" id="YP_536293.1">
    <property type="nucleotide sequence ID" value="NC_007929.1"/>
</dbReference>
<dbReference type="SMR" id="Q1WSB9"/>
<dbReference type="STRING" id="362948.LSL_1406"/>
<dbReference type="KEGG" id="lsl:LSL_1406"/>
<dbReference type="PATRIC" id="fig|362948.14.peg.1489"/>
<dbReference type="HOGENOM" id="CLU_000604_1_22_9"/>
<dbReference type="OrthoDB" id="9784332at2"/>
<dbReference type="Proteomes" id="UP000006559">
    <property type="component" value="Chromosome"/>
</dbReference>
<dbReference type="GO" id="GO:0043190">
    <property type="term" value="C:ATP-binding cassette (ABC) transporter complex"/>
    <property type="evidence" value="ECO:0007669"/>
    <property type="project" value="TreeGrafter"/>
</dbReference>
<dbReference type="GO" id="GO:0005524">
    <property type="term" value="F:ATP binding"/>
    <property type="evidence" value="ECO:0007669"/>
    <property type="project" value="UniProtKB-KW"/>
</dbReference>
<dbReference type="GO" id="GO:0016887">
    <property type="term" value="F:ATP hydrolysis activity"/>
    <property type="evidence" value="ECO:0007669"/>
    <property type="project" value="InterPro"/>
</dbReference>
<dbReference type="GO" id="GO:0042626">
    <property type="term" value="F:ATPase-coupled transmembrane transporter activity"/>
    <property type="evidence" value="ECO:0007669"/>
    <property type="project" value="TreeGrafter"/>
</dbReference>
<dbReference type="CDD" id="cd03225">
    <property type="entry name" value="ABC_cobalt_CbiO_domain1"/>
    <property type="match status" value="1"/>
</dbReference>
<dbReference type="FunFam" id="3.40.50.300:FF:000224">
    <property type="entry name" value="Energy-coupling factor transporter ATP-binding protein EcfA"/>
    <property type="match status" value="1"/>
</dbReference>
<dbReference type="Gene3D" id="3.40.50.300">
    <property type="entry name" value="P-loop containing nucleotide triphosphate hydrolases"/>
    <property type="match status" value="1"/>
</dbReference>
<dbReference type="InterPro" id="IPR003593">
    <property type="entry name" value="AAA+_ATPase"/>
</dbReference>
<dbReference type="InterPro" id="IPR003439">
    <property type="entry name" value="ABC_transporter-like_ATP-bd"/>
</dbReference>
<dbReference type="InterPro" id="IPR017871">
    <property type="entry name" value="ABC_transporter-like_CS"/>
</dbReference>
<dbReference type="InterPro" id="IPR015856">
    <property type="entry name" value="ABC_transpr_CbiO/EcfA_su"/>
</dbReference>
<dbReference type="InterPro" id="IPR050095">
    <property type="entry name" value="ECF_ABC_transporter_ATP-bd"/>
</dbReference>
<dbReference type="InterPro" id="IPR030946">
    <property type="entry name" value="EcfA2"/>
</dbReference>
<dbReference type="InterPro" id="IPR027417">
    <property type="entry name" value="P-loop_NTPase"/>
</dbReference>
<dbReference type="NCBIfam" id="TIGR04521">
    <property type="entry name" value="ECF_ATPase_2"/>
    <property type="match status" value="1"/>
</dbReference>
<dbReference type="NCBIfam" id="NF010155">
    <property type="entry name" value="PRK13634.1"/>
    <property type="match status" value="1"/>
</dbReference>
<dbReference type="PANTHER" id="PTHR43553:SF27">
    <property type="entry name" value="ENERGY-COUPLING FACTOR TRANSPORTER ATP-BINDING PROTEIN ECFA2"/>
    <property type="match status" value="1"/>
</dbReference>
<dbReference type="PANTHER" id="PTHR43553">
    <property type="entry name" value="HEAVY METAL TRANSPORTER"/>
    <property type="match status" value="1"/>
</dbReference>
<dbReference type="Pfam" id="PF00005">
    <property type="entry name" value="ABC_tran"/>
    <property type="match status" value="1"/>
</dbReference>
<dbReference type="SMART" id="SM00382">
    <property type="entry name" value="AAA"/>
    <property type="match status" value="1"/>
</dbReference>
<dbReference type="SUPFAM" id="SSF52540">
    <property type="entry name" value="P-loop containing nucleoside triphosphate hydrolases"/>
    <property type="match status" value="1"/>
</dbReference>
<dbReference type="PROSITE" id="PS00211">
    <property type="entry name" value="ABC_TRANSPORTER_1"/>
    <property type="match status" value="1"/>
</dbReference>
<dbReference type="PROSITE" id="PS50893">
    <property type="entry name" value="ABC_TRANSPORTER_2"/>
    <property type="match status" value="1"/>
</dbReference>
<dbReference type="PROSITE" id="PS51246">
    <property type="entry name" value="CBIO"/>
    <property type="match status" value="1"/>
</dbReference>
<sequence length="289" mass="32215">MSIQAKKLNYTYQIGTPLEHIALKDVSINIKDGSYTAIVGHTGSGKSTLLQHLNGLLKPTSGEISINGYTIDNTTKNKELGKLRKEVGFVFQFPEAQLFEETVLKDIAFAPKNFGKSEDEAEKIAREKAKLVALPEEVLEKSPFELSGGQMRRVAIAGILAMEPKVLVLDEPTAGLDPEGRHQMMEMFNRLHKDENLTIILVTHQMNDVAEYADHVIVLESGKVIADSTPKELFSDPEWLKNHHLNLPQTTDFAYKLFDKLALSKHSLPLKSEELTDEILKILGGNLNE</sequence>
<organism>
    <name type="scientific">Ligilactobacillus salivarius (strain UCC118)</name>
    <name type="common">Lactobacillus salivarius</name>
    <dbReference type="NCBI Taxonomy" id="362948"/>
    <lineage>
        <taxon>Bacteria</taxon>
        <taxon>Bacillati</taxon>
        <taxon>Bacillota</taxon>
        <taxon>Bacilli</taxon>
        <taxon>Lactobacillales</taxon>
        <taxon>Lactobacillaceae</taxon>
        <taxon>Ligilactobacillus</taxon>
    </lineage>
</organism>
<feature type="chain" id="PRO_0000287955" description="Energy-coupling factor transporter ATP-binding protein EcfA2">
    <location>
        <begin position="1"/>
        <end position="289"/>
    </location>
</feature>
<feature type="domain" description="ABC transporter" evidence="1">
    <location>
        <begin position="3"/>
        <end position="246"/>
    </location>
</feature>
<feature type="binding site" evidence="1">
    <location>
        <begin position="40"/>
        <end position="47"/>
    </location>
    <ligand>
        <name>ATP</name>
        <dbReference type="ChEBI" id="CHEBI:30616"/>
    </ligand>
</feature>
<evidence type="ECO:0000255" key="1">
    <source>
        <dbReference type="HAMAP-Rule" id="MF_01710"/>
    </source>
</evidence>
<protein>
    <recommendedName>
        <fullName evidence="1">Energy-coupling factor transporter ATP-binding protein EcfA2</fullName>
        <shortName evidence="1">ECF transporter A component EcfA2</shortName>
        <ecNumber evidence="1">7.-.-.-</ecNumber>
    </recommendedName>
</protein>
<comment type="function">
    <text evidence="1">ATP-binding (A) component of a common energy-coupling factor (ECF) ABC-transporter complex. Unlike classic ABC transporters this ECF transporter provides the energy necessary to transport a number of different substrates.</text>
</comment>
<comment type="subunit">
    <text evidence="1">Forms a stable energy-coupling factor (ECF) transporter complex composed of 2 membrane-embedded substrate-binding proteins (S component), 2 ATP-binding proteins (A component) and 2 transmembrane proteins (T component).</text>
</comment>
<comment type="subcellular location">
    <subcellularLocation>
        <location evidence="1">Cell membrane</location>
        <topology evidence="1">Peripheral membrane protein</topology>
    </subcellularLocation>
</comment>
<comment type="similarity">
    <text evidence="1">Belongs to the ABC transporter superfamily. Energy-coupling factor EcfA family.</text>
</comment>
<name>ECFA2_LIGS1</name>
<keyword id="KW-0067">ATP-binding</keyword>
<keyword id="KW-1003">Cell membrane</keyword>
<keyword id="KW-0472">Membrane</keyword>
<keyword id="KW-0547">Nucleotide-binding</keyword>
<keyword id="KW-1185">Reference proteome</keyword>
<keyword id="KW-1278">Translocase</keyword>
<keyword id="KW-0813">Transport</keyword>
<reference key="1">
    <citation type="journal article" date="2006" name="Proc. Natl. Acad. Sci. U.S.A.">
        <title>Multireplicon genome architecture of Lactobacillus salivarius.</title>
        <authorList>
            <person name="Claesson M.J."/>
            <person name="Li Y."/>
            <person name="Leahy S."/>
            <person name="Canchaya C."/>
            <person name="van Pijkeren J.P."/>
            <person name="Cerdeno-Tarraga A.M."/>
            <person name="Parkhill J."/>
            <person name="Flynn S."/>
            <person name="O'Sullivan G.C."/>
            <person name="Collins J.K."/>
            <person name="Higgins D."/>
            <person name="Shanahan F."/>
            <person name="Fitzgerald G.F."/>
            <person name="van Sinderen D."/>
            <person name="O'Toole P.W."/>
        </authorList>
    </citation>
    <scope>NUCLEOTIDE SEQUENCE [LARGE SCALE GENOMIC DNA]</scope>
    <source>
        <strain>UCC118</strain>
    </source>
</reference>